<gene>
    <name evidence="1" type="primary">acpP</name>
    <name type="ordered locus">Lcho_0608</name>
</gene>
<sequence length="79" mass="8554">MSDIEARVKKIIAEQLGVAEAEVTSEKAFVADLGADSLDTVELVMALEDEFGIEIPDEEAEKITTVQLAIDYAKNNVKA</sequence>
<comment type="function">
    <text evidence="1">Carrier of the growing fatty acid chain in fatty acid biosynthesis.</text>
</comment>
<comment type="pathway">
    <text evidence="1">Lipid metabolism; fatty acid biosynthesis.</text>
</comment>
<comment type="subcellular location">
    <subcellularLocation>
        <location evidence="1">Cytoplasm</location>
    </subcellularLocation>
</comment>
<comment type="PTM">
    <text evidence="1">4'-phosphopantetheine is transferred from CoA to a specific serine of apo-ACP by AcpS. This modification is essential for activity because fatty acids are bound in thioester linkage to the sulfhydryl of the prosthetic group.</text>
</comment>
<comment type="similarity">
    <text evidence="1">Belongs to the acyl carrier protein (ACP) family.</text>
</comment>
<reference key="1">
    <citation type="submission" date="2008-03" db="EMBL/GenBank/DDBJ databases">
        <title>Complete sequence of Leptothrix cholodnii SP-6.</title>
        <authorList>
            <consortium name="US DOE Joint Genome Institute"/>
            <person name="Copeland A."/>
            <person name="Lucas S."/>
            <person name="Lapidus A."/>
            <person name="Glavina del Rio T."/>
            <person name="Dalin E."/>
            <person name="Tice H."/>
            <person name="Bruce D."/>
            <person name="Goodwin L."/>
            <person name="Pitluck S."/>
            <person name="Chertkov O."/>
            <person name="Brettin T."/>
            <person name="Detter J.C."/>
            <person name="Han C."/>
            <person name="Kuske C.R."/>
            <person name="Schmutz J."/>
            <person name="Larimer F."/>
            <person name="Land M."/>
            <person name="Hauser L."/>
            <person name="Kyrpides N."/>
            <person name="Lykidis A."/>
            <person name="Emerson D."/>
            <person name="Richardson P."/>
        </authorList>
    </citation>
    <scope>NUCLEOTIDE SEQUENCE [LARGE SCALE GENOMIC DNA]</scope>
    <source>
        <strain>ATCC 51168 / LMG 8142 / SP-6</strain>
    </source>
</reference>
<organism>
    <name type="scientific">Leptothrix cholodnii (strain ATCC 51168 / LMG 8142 / SP-6)</name>
    <name type="common">Leptothrix discophora (strain SP-6)</name>
    <dbReference type="NCBI Taxonomy" id="395495"/>
    <lineage>
        <taxon>Bacteria</taxon>
        <taxon>Pseudomonadati</taxon>
        <taxon>Pseudomonadota</taxon>
        <taxon>Betaproteobacteria</taxon>
        <taxon>Burkholderiales</taxon>
        <taxon>Sphaerotilaceae</taxon>
        <taxon>Leptothrix</taxon>
    </lineage>
</organism>
<feature type="chain" id="PRO_1000139040" description="Acyl carrier protein">
    <location>
        <begin position="1"/>
        <end position="79"/>
    </location>
</feature>
<feature type="domain" description="Carrier" evidence="2">
    <location>
        <begin position="2"/>
        <end position="77"/>
    </location>
</feature>
<feature type="modified residue" description="O-(pantetheine 4'-phosphoryl)serine" evidence="2">
    <location>
        <position position="37"/>
    </location>
</feature>
<accession>B1XZN7</accession>
<name>ACP_LEPCP</name>
<protein>
    <recommendedName>
        <fullName evidence="1">Acyl carrier protein</fullName>
        <shortName evidence="1">ACP</shortName>
    </recommendedName>
</protein>
<keyword id="KW-0963">Cytoplasm</keyword>
<keyword id="KW-0275">Fatty acid biosynthesis</keyword>
<keyword id="KW-0276">Fatty acid metabolism</keyword>
<keyword id="KW-0444">Lipid biosynthesis</keyword>
<keyword id="KW-0443">Lipid metabolism</keyword>
<keyword id="KW-0596">Phosphopantetheine</keyword>
<keyword id="KW-0597">Phosphoprotein</keyword>
<keyword id="KW-1185">Reference proteome</keyword>
<evidence type="ECO:0000255" key="1">
    <source>
        <dbReference type="HAMAP-Rule" id="MF_01217"/>
    </source>
</evidence>
<evidence type="ECO:0000255" key="2">
    <source>
        <dbReference type="PROSITE-ProRule" id="PRU00258"/>
    </source>
</evidence>
<proteinExistence type="inferred from homology"/>
<dbReference type="EMBL" id="CP001013">
    <property type="protein sequence ID" value="ACB32883.1"/>
    <property type="molecule type" value="Genomic_DNA"/>
</dbReference>
<dbReference type="RefSeq" id="WP_012345645.1">
    <property type="nucleotide sequence ID" value="NC_010524.1"/>
</dbReference>
<dbReference type="SMR" id="B1XZN7"/>
<dbReference type="STRING" id="395495.Lcho_0608"/>
<dbReference type="KEGG" id="lch:Lcho_0608"/>
<dbReference type="eggNOG" id="COG0236">
    <property type="taxonomic scope" value="Bacteria"/>
</dbReference>
<dbReference type="HOGENOM" id="CLU_108696_5_1_4"/>
<dbReference type="OrthoDB" id="9804551at2"/>
<dbReference type="UniPathway" id="UPA00094"/>
<dbReference type="Proteomes" id="UP000001693">
    <property type="component" value="Chromosome"/>
</dbReference>
<dbReference type="GO" id="GO:0005829">
    <property type="term" value="C:cytosol"/>
    <property type="evidence" value="ECO:0007669"/>
    <property type="project" value="TreeGrafter"/>
</dbReference>
<dbReference type="GO" id="GO:0016020">
    <property type="term" value="C:membrane"/>
    <property type="evidence" value="ECO:0007669"/>
    <property type="project" value="GOC"/>
</dbReference>
<dbReference type="GO" id="GO:0000035">
    <property type="term" value="F:acyl binding"/>
    <property type="evidence" value="ECO:0007669"/>
    <property type="project" value="TreeGrafter"/>
</dbReference>
<dbReference type="GO" id="GO:0000036">
    <property type="term" value="F:acyl carrier activity"/>
    <property type="evidence" value="ECO:0007669"/>
    <property type="project" value="UniProtKB-UniRule"/>
</dbReference>
<dbReference type="GO" id="GO:0031177">
    <property type="term" value="F:phosphopantetheine binding"/>
    <property type="evidence" value="ECO:0007669"/>
    <property type="project" value="InterPro"/>
</dbReference>
<dbReference type="GO" id="GO:0009245">
    <property type="term" value="P:lipid A biosynthetic process"/>
    <property type="evidence" value="ECO:0007669"/>
    <property type="project" value="TreeGrafter"/>
</dbReference>
<dbReference type="FunFam" id="1.10.1200.10:FF:000001">
    <property type="entry name" value="Acyl carrier protein"/>
    <property type="match status" value="1"/>
</dbReference>
<dbReference type="Gene3D" id="1.10.1200.10">
    <property type="entry name" value="ACP-like"/>
    <property type="match status" value="1"/>
</dbReference>
<dbReference type="HAMAP" id="MF_01217">
    <property type="entry name" value="Acyl_carrier"/>
    <property type="match status" value="1"/>
</dbReference>
<dbReference type="InterPro" id="IPR003231">
    <property type="entry name" value="ACP"/>
</dbReference>
<dbReference type="InterPro" id="IPR036736">
    <property type="entry name" value="ACP-like_sf"/>
</dbReference>
<dbReference type="InterPro" id="IPR020806">
    <property type="entry name" value="PKS_PP-bd"/>
</dbReference>
<dbReference type="InterPro" id="IPR009081">
    <property type="entry name" value="PP-bd_ACP"/>
</dbReference>
<dbReference type="InterPro" id="IPR006162">
    <property type="entry name" value="Ppantetheine_attach_site"/>
</dbReference>
<dbReference type="NCBIfam" id="TIGR00517">
    <property type="entry name" value="acyl_carrier"/>
    <property type="match status" value="1"/>
</dbReference>
<dbReference type="NCBIfam" id="NF002148">
    <property type="entry name" value="PRK00982.1-2"/>
    <property type="match status" value="1"/>
</dbReference>
<dbReference type="NCBIfam" id="NF002149">
    <property type="entry name" value="PRK00982.1-3"/>
    <property type="match status" value="1"/>
</dbReference>
<dbReference type="NCBIfam" id="NF002150">
    <property type="entry name" value="PRK00982.1-4"/>
    <property type="match status" value="1"/>
</dbReference>
<dbReference type="NCBIfam" id="NF002151">
    <property type="entry name" value="PRK00982.1-5"/>
    <property type="match status" value="1"/>
</dbReference>
<dbReference type="PANTHER" id="PTHR20863">
    <property type="entry name" value="ACYL CARRIER PROTEIN"/>
    <property type="match status" value="1"/>
</dbReference>
<dbReference type="PANTHER" id="PTHR20863:SF76">
    <property type="entry name" value="CARRIER DOMAIN-CONTAINING PROTEIN"/>
    <property type="match status" value="1"/>
</dbReference>
<dbReference type="Pfam" id="PF00550">
    <property type="entry name" value="PP-binding"/>
    <property type="match status" value="1"/>
</dbReference>
<dbReference type="SMART" id="SM00823">
    <property type="entry name" value="PKS_PP"/>
    <property type="match status" value="1"/>
</dbReference>
<dbReference type="SUPFAM" id="SSF47336">
    <property type="entry name" value="ACP-like"/>
    <property type="match status" value="1"/>
</dbReference>
<dbReference type="PROSITE" id="PS50075">
    <property type="entry name" value="CARRIER"/>
    <property type="match status" value="1"/>
</dbReference>
<dbReference type="PROSITE" id="PS00012">
    <property type="entry name" value="PHOSPHOPANTETHEINE"/>
    <property type="match status" value="1"/>
</dbReference>